<evidence type="ECO:0000255" key="1">
    <source>
        <dbReference type="HAMAP-Rule" id="MF_00711"/>
    </source>
</evidence>
<feature type="chain" id="PRO_0000227100" description="Glycine dehydrogenase (decarboxylating)">
    <location>
        <begin position="1"/>
        <end position="975"/>
    </location>
</feature>
<feature type="modified residue" description="N6-(pyridoxal phosphate)lysine" evidence="1">
    <location>
        <position position="723"/>
    </location>
</feature>
<accession>Q39KU1</accession>
<gene>
    <name evidence="1" type="primary">gcvP</name>
    <name type="ordered locus">Bcep18194_A3323</name>
</gene>
<comment type="function">
    <text evidence="1">The glycine cleavage system catalyzes the degradation of glycine. The P protein binds the alpha-amino group of glycine through its pyridoxal phosphate cofactor; CO(2) is released and the remaining methylamine moiety is then transferred to the lipoamide cofactor of the H protein.</text>
</comment>
<comment type="catalytic activity">
    <reaction evidence="1">
        <text>N(6)-[(R)-lipoyl]-L-lysyl-[glycine-cleavage complex H protein] + glycine + H(+) = N(6)-[(R)-S(8)-aminomethyldihydrolipoyl]-L-lysyl-[glycine-cleavage complex H protein] + CO2</text>
        <dbReference type="Rhea" id="RHEA:24304"/>
        <dbReference type="Rhea" id="RHEA-COMP:10494"/>
        <dbReference type="Rhea" id="RHEA-COMP:10495"/>
        <dbReference type="ChEBI" id="CHEBI:15378"/>
        <dbReference type="ChEBI" id="CHEBI:16526"/>
        <dbReference type="ChEBI" id="CHEBI:57305"/>
        <dbReference type="ChEBI" id="CHEBI:83099"/>
        <dbReference type="ChEBI" id="CHEBI:83143"/>
        <dbReference type="EC" id="1.4.4.2"/>
    </reaction>
</comment>
<comment type="cofactor">
    <cofactor evidence="1">
        <name>pyridoxal 5'-phosphate</name>
        <dbReference type="ChEBI" id="CHEBI:597326"/>
    </cofactor>
</comment>
<comment type="subunit">
    <text evidence="1">The glycine cleavage system is composed of four proteins: P, T, L and H.</text>
</comment>
<comment type="similarity">
    <text evidence="1">Belongs to the GcvP family.</text>
</comment>
<protein>
    <recommendedName>
        <fullName evidence="1">Glycine dehydrogenase (decarboxylating)</fullName>
        <ecNumber evidence="1">1.4.4.2</ecNumber>
    </recommendedName>
    <alternativeName>
        <fullName evidence="1">Glycine cleavage system P-protein</fullName>
    </alternativeName>
    <alternativeName>
        <fullName evidence="1">Glycine decarboxylase</fullName>
    </alternativeName>
    <alternativeName>
        <fullName evidence="1">Glycine dehydrogenase (aminomethyl-transferring)</fullName>
    </alternativeName>
</protein>
<reference key="1">
    <citation type="submission" date="2005-10" db="EMBL/GenBank/DDBJ databases">
        <title>Complete sequence of chromosome 1 of Burkholderia sp. 383.</title>
        <authorList>
            <consortium name="US DOE Joint Genome Institute"/>
            <person name="Copeland A."/>
            <person name="Lucas S."/>
            <person name="Lapidus A."/>
            <person name="Barry K."/>
            <person name="Detter J.C."/>
            <person name="Glavina T."/>
            <person name="Hammon N."/>
            <person name="Israni S."/>
            <person name="Pitluck S."/>
            <person name="Chain P."/>
            <person name="Malfatti S."/>
            <person name="Shin M."/>
            <person name="Vergez L."/>
            <person name="Schmutz J."/>
            <person name="Larimer F."/>
            <person name="Land M."/>
            <person name="Kyrpides N."/>
            <person name="Lykidis A."/>
            <person name="Richardson P."/>
        </authorList>
    </citation>
    <scope>NUCLEOTIDE SEQUENCE [LARGE SCALE GENOMIC DNA]</scope>
    <source>
        <strain>ATCC 17760 / DSM 23089 / LMG 22485 / NCIMB 9086 / R18194 / 383</strain>
    </source>
</reference>
<name>GCSP_BURL3</name>
<organism>
    <name type="scientific">Burkholderia lata (strain ATCC 17760 / DSM 23089 / LMG 22485 / NCIMB 9086 / R18194 / 383)</name>
    <dbReference type="NCBI Taxonomy" id="482957"/>
    <lineage>
        <taxon>Bacteria</taxon>
        <taxon>Pseudomonadati</taxon>
        <taxon>Pseudomonadota</taxon>
        <taxon>Betaproteobacteria</taxon>
        <taxon>Burkholderiales</taxon>
        <taxon>Burkholderiaceae</taxon>
        <taxon>Burkholderia</taxon>
        <taxon>Burkholderia cepacia complex</taxon>
    </lineage>
</organism>
<keyword id="KW-0560">Oxidoreductase</keyword>
<keyword id="KW-0663">Pyridoxal phosphate</keyword>
<proteinExistence type="inferred from homology"/>
<dbReference type="EC" id="1.4.4.2" evidence="1"/>
<dbReference type="EMBL" id="CP000151">
    <property type="protein sequence ID" value="ABB06925.1"/>
    <property type="molecule type" value="Genomic_DNA"/>
</dbReference>
<dbReference type="RefSeq" id="WP_011350561.1">
    <property type="nucleotide sequence ID" value="NC_007510.1"/>
</dbReference>
<dbReference type="SMR" id="Q39KU1"/>
<dbReference type="GeneID" id="45093230"/>
<dbReference type="KEGG" id="bur:Bcep18194_A3323"/>
<dbReference type="PATRIC" id="fig|482957.22.peg.156"/>
<dbReference type="HOGENOM" id="CLU_004620_3_2_4"/>
<dbReference type="Proteomes" id="UP000002705">
    <property type="component" value="Chromosome 1"/>
</dbReference>
<dbReference type="GO" id="GO:0005829">
    <property type="term" value="C:cytosol"/>
    <property type="evidence" value="ECO:0007669"/>
    <property type="project" value="TreeGrafter"/>
</dbReference>
<dbReference type="GO" id="GO:0005960">
    <property type="term" value="C:glycine cleavage complex"/>
    <property type="evidence" value="ECO:0007669"/>
    <property type="project" value="TreeGrafter"/>
</dbReference>
<dbReference type="GO" id="GO:0016594">
    <property type="term" value="F:glycine binding"/>
    <property type="evidence" value="ECO:0007669"/>
    <property type="project" value="TreeGrafter"/>
</dbReference>
<dbReference type="GO" id="GO:0004375">
    <property type="term" value="F:glycine dehydrogenase (decarboxylating) activity"/>
    <property type="evidence" value="ECO:0007669"/>
    <property type="project" value="UniProtKB-EC"/>
</dbReference>
<dbReference type="GO" id="GO:0030170">
    <property type="term" value="F:pyridoxal phosphate binding"/>
    <property type="evidence" value="ECO:0007669"/>
    <property type="project" value="TreeGrafter"/>
</dbReference>
<dbReference type="GO" id="GO:0019464">
    <property type="term" value="P:glycine decarboxylation via glycine cleavage system"/>
    <property type="evidence" value="ECO:0007669"/>
    <property type="project" value="UniProtKB-UniRule"/>
</dbReference>
<dbReference type="CDD" id="cd00613">
    <property type="entry name" value="GDC-P"/>
    <property type="match status" value="2"/>
</dbReference>
<dbReference type="FunFam" id="3.40.640.10:FF:000005">
    <property type="entry name" value="Glycine dehydrogenase (decarboxylating), mitochondrial"/>
    <property type="match status" value="1"/>
</dbReference>
<dbReference type="FunFam" id="3.90.1150.10:FF:000007">
    <property type="entry name" value="Glycine dehydrogenase (decarboxylating), mitochondrial"/>
    <property type="match status" value="1"/>
</dbReference>
<dbReference type="FunFam" id="3.40.640.10:FF:000007">
    <property type="entry name" value="glycine dehydrogenase (Decarboxylating), mitochondrial"/>
    <property type="match status" value="1"/>
</dbReference>
<dbReference type="Gene3D" id="3.90.1150.10">
    <property type="entry name" value="Aspartate Aminotransferase, domain 1"/>
    <property type="match status" value="2"/>
</dbReference>
<dbReference type="Gene3D" id="3.40.640.10">
    <property type="entry name" value="Type I PLP-dependent aspartate aminotransferase-like (Major domain)"/>
    <property type="match status" value="2"/>
</dbReference>
<dbReference type="HAMAP" id="MF_00711">
    <property type="entry name" value="GcvP"/>
    <property type="match status" value="1"/>
</dbReference>
<dbReference type="InterPro" id="IPR003437">
    <property type="entry name" value="GcvP"/>
</dbReference>
<dbReference type="InterPro" id="IPR049316">
    <property type="entry name" value="GDC-P_C"/>
</dbReference>
<dbReference type="InterPro" id="IPR049315">
    <property type="entry name" value="GDC-P_N"/>
</dbReference>
<dbReference type="InterPro" id="IPR020581">
    <property type="entry name" value="GDC_P"/>
</dbReference>
<dbReference type="InterPro" id="IPR015424">
    <property type="entry name" value="PyrdxlP-dep_Trfase"/>
</dbReference>
<dbReference type="InterPro" id="IPR015421">
    <property type="entry name" value="PyrdxlP-dep_Trfase_major"/>
</dbReference>
<dbReference type="InterPro" id="IPR015422">
    <property type="entry name" value="PyrdxlP-dep_Trfase_small"/>
</dbReference>
<dbReference type="NCBIfam" id="TIGR00461">
    <property type="entry name" value="gcvP"/>
    <property type="match status" value="1"/>
</dbReference>
<dbReference type="NCBIfam" id="NF003346">
    <property type="entry name" value="PRK04366.1"/>
    <property type="match status" value="1"/>
</dbReference>
<dbReference type="PANTHER" id="PTHR11773:SF1">
    <property type="entry name" value="GLYCINE DEHYDROGENASE (DECARBOXYLATING), MITOCHONDRIAL"/>
    <property type="match status" value="1"/>
</dbReference>
<dbReference type="PANTHER" id="PTHR11773">
    <property type="entry name" value="GLYCINE DEHYDROGENASE, DECARBOXYLATING"/>
    <property type="match status" value="1"/>
</dbReference>
<dbReference type="Pfam" id="PF21478">
    <property type="entry name" value="GcvP2_C"/>
    <property type="match status" value="1"/>
</dbReference>
<dbReference type="Pfam" id="PF02347">
    <property type="entry name" value="GDC-P"/>
    <property type="match status" value="2"/>
</dbReference>
<dbReference type="SUPFAM" id="SSF53383">
    <property type="entry name" value="PLP-dependent transferases"/>
    <property type="match status" value="2"/>
</dbReference>
<sequence length="975" mass="104270">MKLEHPDRLMNRTPLSLAALETHDAFAERHIGPDAASQQAMLDTLGFASRAALIDAVIPASIRRAETLPLGPFAQPKSEAEALAALRVLADKNEVFRSYIGQGYHDTHTPAVILRNVLENPAWYTAYTPYQPEISQGRLEALLNFQQMVADLTGLAISNASLLDEATAAAEAMTLLQRTGKPTSNVFYVADDVLPQTLEVIRTRALPVGIEVKTGPAADAAQANAFGVLLQYPGVNGDVRDYRALTEAIHAAGGHVVVAADLLALTVLTPPGDWGADVAIGNTQRFGVPMGFGGPHAAYLAVRDEFKRQMPGRLVGVTVDAQGKPALRLALQTREQHIRREKATSNVCTAQALLAIMASMYAVYHGPHGLKTIALRVNRIAALLAAGVKQLGFATVNDTFFDTLTIDTGARTAQVHEFAKAKRINLRRVSDTQVGVSVDETTTRDDLADLLAVFAQAAGGTAPAVDALDAGLAGVAALPAGLERTSAYLTHHVFNRHHSETEMLRYLRSLSDKDLALDRSMIPLGSCTMKLNATSEMLPVTWPEFGGIHPFAPAEQTVGYREMIDQLEQMLVAATGYAAVSLQPNAGSQGEYAGLLIIHAYHASRGEAHRDVCLIPASAHGTNPASAHMAGMKVVVVACDAQGNVDIADLKAKADEHAKDLAAIMITYPSTHGVFEQNVREICEIVHAHGGQVYVDGANMNAMVGLTAPGQFGGDVSHLNLHKTFCIPHGGGGPGVGPVAVGAHLAKFLPNQRSTGYTREEDGIGAVSAAPYGSASILPISWMYIAMMGAKNLTAATETAILNANYIAKRLAPHYPVLYSGPGGLVAHECILDLRPIKESSGISVDDVAKRLMDYGFHAPTMSFPVPGTLMVEPTESESQEELDRFIAAMIAIRDEIRAVEEGRADREDNPLRHAPHTAAVVTANEWLHAYSREQAAYPVASLGTNKYWPPVGRADNVYGDRNLFCSCVPMSEYA</sequence>